<name>RHBG_RABIT</name>
<comment type="function">
    <text evidence="2">Ammonium transporter involved in the maintenance of acid-base homeostasis. Transports ammonium and its related derivative methylammonium across the basolateral plasma membrane of epithelial cells likely contributing to renal transepithelial ammonia transport and ammonia metabolism. May transport either NH4(+) or NH3 ammonia species predominantly mediating an electrogenic NH4(+) transport (By similarity). May act as a CO2 channel providing for renal acid secretion (By similarity).</text>
</comment>
<comment type="catalytic activity">
    <reaction evidence="2">
        <text>NH4(+)(in) = NH4(+)(out)</text>
        <dbReference type="Rhea" id="RHEA:28747"/>
        <dbReference type="ChEBI" id="CHEBI:28938"/>
    </reaction>
    <physiologicalReaction direction="left-to-right" evidence="2">
        <dbReference type="Rhea" id="RHEA:28748"/>
    </physiologicalReaction>
    <physiologicalReaction direction="right-to-left" evidence="2">
        <dbReference type="Rhea" id="RHEA:28749"/>
    </physiologicalReaction>
</comment>
<comment type="catalytic activity">
    <reaction evidence="2">
        <text>methylamine(out) = methylamine(in)</text>
        <dbReference type="Rhea" id="RHEA:74391"/>
        <dbReference type="ChEBI" id="CHEBI:59338"/>
    </reaction>
    <physiologicalReaction direction="left-to-right" evidence="2">
        <dbReference type="Rhea" id="RHEA:74392"/>
    </physiologicalReaction>
</comment>
<comment type="catalytic activity">
    <reaction evidence="2">
        <text>CO2(out) = CO2(in)</text>
        <dbReference type="Rhea" id="RHEA:74891"/>
        <dbReference type="ChEBI" id="CHEBI:16526"/>
    </reaction>
    <physiologicalReaction direction="left-to-right" evidence="2">
        <dbReference type="Rhea" id="RHEA:74892"/>
    </physiologicalReaction>
</comment>
<comment type="subunit">
    <text evidence="2">Interacts (via C-terminus) with ANK2 and ANK3; required for targeting to the basolateral membrane.</text>
</comment>
<comment type="subcellular location">
    <subcellularLocation>
        <location evidence="2">Cell membrane</location>
        <topology evidence="2">Multi-pass membrane protein</topology>
    </subcellularLocation>
    <subcellularLocation>
        <location evidence="2">Basolateral cell membrane</location>
        <topology evidence="3">Multi-pass membrane protein</topology>
    </subcellularLocation>
</comment>
<comment type="PTM">
    <text evidence="1">N-glycosylated.</text>
</comment>
<comment type="similarity">
    <text evidence="4">Belongs to the ammonium transporter (TC 2.A.49) family. Rh subfamily.</text>
</comment>
<proteinExistence type="evidence at transcript level"/>
<evidence type="ECO:0000250" key="1"/>
<evidence type="ECO:0000250" key="2">
    <source>
        <dbReference type="UniProtKB" id="Q9H310"/>
    </source>
</evidence>
<evidence type="ECO:0000255" key="3"/>
<evidence type="ECO:0000305" key="4"/>
<feature type="chain" id="PRO_0000283604" description="Ammonium transporter Rh type B">
    <location>
        <begin position="1"/>
        <end position="458"/>
    </location>
</feature>
<feature type="topological domain" description="Cytoplasmic" evidence="3">
    <location>
        <begin position="1"/>
        <end position="13"/>
    </location>
</feature>
<feature type="transmembrane region" description="Helical" evidence="3">
    <location>
        <begin position="14"/>
        <end position="34"/>
    </location>
</feature>
<feature type="topological domain" description="Extracellular" evidence="3">
    <location>
        <begin position="35"/>
        <end position="61"/>
    </location>
</feature>
<feature type="transmembrane region" description="Helical" evidence="3">
    <location>
        <begin position="62"/>
        <end position="82"/>
    </location>
</feature>
<feature type="topological domain" description="Cytoplasmic" evidence="3">
    <location>
        <begin position="83"/>
        <end position="86"/>
    </location>
</feature>
<feature type="transmembrane region" description="Helical" evidence="3">
    <location>
        <begin position="87"/>
        <end position="107"/>
    </location>
</feature>
<feature type="topological domain" description="Extracellular" evidence="3">
    <location>
        <begin position="108"/>
        <end position="124"/>
    </location>
</feature>
<feature type="transmembrane region" description="Helical" evidence="3">
    <location>
        <begin position="125"/>
        <end position="145"/>
    </location>
</feature>
<feature type="topological domain" description="Cytoplasmic" evidence="3">
    <location>
        <begin position="146"/>
        <end position="149"/>
    </location>
</feature>
<feature type="transmembrane region" description="Helical" evidence="3">
    <location>
        <begin position="150"/>
        <end position="170"/>
    </location>
</feature>
<feature type="topological domain" description="Extracellular" evidence="3">
    <location>
        <begin position="171"/>
        <end position="178"/>
    </location>
</feature>
<feature type="transmembrane region" description="Helical" evidence="3">
    <location>
        <begin position="179"/>
        <end position="201"/>
    </location>
</feature>
<feature type="topological domain" description="Cytoplasmic" evidence="3">
    <location>
        <begin position="202"/>
        <end position="219"/>
    </location>
</feature>
<feature type="transmembrane region" description="Helical" evidence="3">
    <location>
        <begin position="220"/>
        <end position="240"/>
    </location>
</feature>
<feature type="topological domain" description="Extracellular" evidence="3">
    <location>
        <begin position="241"/>
        <end position="251"/>
    </location>
</feature>
<feature type="transmembrane region" description="Helical" evidence="3">
    <location>
        <begin position="252"/>
        <end position="272"/>
    </location>
</feature>
<feature type="topological domain" description="Cytoplasmic" evidence="3">
    <location>
        <begin position="273"/>
        <end position="282"/>
    </location>
</feature>
<feature type="transmembrane region" description="Helical" evidence="3">
    <location>
        <begin position="283"/>
        <end position="303"/>
    </location>
</feature>
<feature type="topological domain" description="Extracellular" evidence="3">
    <location>
        <position position="304"/>
    </location>
</feature>
<feature type="transmembrane region" description="Helical" evidence="3">
    <location>
        <begin position="305"/>
        <end position="325"/>
    </location>
</feature>
<feature type="topological domain" description="Cytoplasmic" evidence="3">
    <location>
        <begin position="326"/>
        <end position="346"/>
    </location>
</feature>
<feature type="transmembrane region" description="Helical" evidence="3">
    <location>
        <begin position="347"/>
        <end position="367"/>
    </location>
</feature>
<feature type="topological domain" description="Extracellular" evidence="3">
    <location>
        <begin position="368"/>
        <end position="393"/>
    </location>
</feature>
<feature type="transmembrane region" description="Helical" evidence="3">
    <location>
        <begin position="394"/>
        <end position="414"/>
    </location>
</feature>
<feature type="topological domain" description="Cytoplasmic" evidence="3">
    <location>
        <begin position="415"/>
        <end position="458"/>
    </location>
</feature>
<feature type="region of interest" description="Interaction with ANK3" evidence="1">
    <location>
        <begin position="416"/>
        <end position="424"/>
    </location>
</feature>
<feature type="short sequence motif" description="Basolateral sorting signal" evidence="1">
    <location>
        <begin position="429"/>
        <end position="432"/>
    </location>
</feature>
<feature type="glycosylation site" description="N-linked (GlcNAc...) asparagine" evidence="3">
    <location>
        <position position="49"/>
    </location>
</feature>
<accession>Q95JD4</accession>
<gene>
    <name type="primary">RHBG</name>
</gene>
<sequence length="458" mass="49425">MAKSPRRVAGRRLLLPLLCLFFQGATAILFAIFVRYDQQTDAALWHGGNHSNADNEFYFRYPSFQDVHAMVFVGFGFLMVFLQRYGYSSLGFTFLLGAFALQWATLVQGFLHSFHGGHIHVGMESLINADFCAGAVLISFGAVLGKTGPAQLLLMALLEVALFGLNEFVLLCLLGVRDAGGSMTIHTFGAYFGLVLSRVLYRPHLEKSQHRQGSVYHSDLFAMIGTIFLWIFWPSFNSALTSRGDGQPRTALNTYYSLTASTLSTFALSALVGKDGRLDMVHVQNAALAGGVVVGTASEMMLTPFGALAAGCLAGAISTLGYKFFTPILESKLKIQDTCGVHNLHGMPGVLGALLGALMTGLTTHEAYGDGLQSVFPLIAEGQRSATSQAIYQLFGLSVTLLFASAGGVLGGLLLKLPFLDAPPDSQCYEDQMCWEVPGEHGYEAQEALRVEEPDTEA</sequence>
<keyword id="KW-0924">Ammonia transport</keyword>
<keyword id="KW-1003">Cell membrane</keyword>
<keyword id="KW-0325">Glycoprotein</keyword>
<keyword id="KW-0472">Membrane</keyword>
<keyword id="KW-1185">Reference proteome</keyword>
<keyword id="KW-0812">Transmembrane</keyword>
<keyword id="KW-1133">Transmembrane helix</keyword>
<keyword id="KW-0813">Transport</keyword>
<protein>
    <recommendedName>
        <fullName>Ammonium transporter Rh type B</fullName>
    </recommendedName>
    <alternativeName>
        <fullName>Rhesus blood group family type B glycoprotein</fullName>
        <shortName>Rh family type B glycoprotein</shortName>
        <shortName>Rh type B glycoprotein</shortName>
    </alternativeName>
</protein>
<reference key="1">
    <citation type="journal article" date="2005" name="Proc. Natl. Acad. Sci. U.S.A.">
        <title>Evolutionary conservation and diversification of Rh family genes and proteins.</title>
        <authorList>
            <person name="Huang C.-H."/>
            <person name="Peng J."/>
        </authorList>
    </citation>
    <scope>NUCLEOTIDE SEQUENCE [MRNA]</scope>
    <source>
        <tissue>Kidney</tissue>
    </source>
</reference>
<organism>
    <name type="scientific">Oryctolagus cuniculus</name>
    <name type="common">Rabbit</name>
    <dbReference type="NCBI Taxonomy" id="9986"/>
    <lineage>
        <taxon>Eukaryota</taxon>
        <taxon>Metazoa</taxon>
        <taxon>Chordata</taxon>
        <taxon>Craniata</taxon>
        <taxon>Vertebrata</taxon>
        <taxon>Euteleostomi</taxon>
        <taxon>Mammalia</taxon>
        <taxon>Eutheria</taxon>
        <taxon>Euarchontoglires</taxon>
        <taxon>Glires</taxon>
        <taxon>Lagomorpha</taxon>
        <taxon>Leporidae</taxon>
        <taxon>Oryctolagus</taxon>
    </lineage>
</organism>
<dbReference type="EMBL" id="AY013262">
    <property type="protein sequence ID" value="AAK14652.1"/>
    <property type="molecule type" value="mRNA"/>
</dbReference>
<dbReference type="RefSeq" id="NP_001075605.1">
    <property type="nucleotide sequence ID" value="NM_001082136.1"/>
</dbReference>
<dbReference type="SMR" id="Q95JD4"/>
<dbReference type="FunCoup" id="Q95JD4">
    <property type="interactions" value="25"/>
</dbReference>
<dbReference type="STRING" id="9986.ENSOCUP00000023475"/>
<dbReference type="GlyCosmos" id="Q95JD4">
    <property type="glycosylation" value="1 site, No reported glycans"/>
</dbReference>
<dbReference type="PaxDb" id="9986-ENSOCUP00000023475"/>
<dbReference type="Ensembl" id="ENSOCUT00000023604.3">
    <property type="protein sequence ID" value="ENSOCUP00000023475.3"/>
    <property type="gene ID" value="ENSOCUG00000016130.4"/>
</dbReference>
<dbReference type="GeneID" id="100008876"/>
<dbReference type="KEGG" id="ocu:100008876"/>
<dbReference type="CTD" id="57127"/>
<dbReference type="eggNOG" id="KOG3796">
    <property type="taxonomic scope" value="Eukaryota"/>
</dbReference>
<dbReference type="GeneTree" id="ENSGT00950000182844"/>
<dbReference type="InParanoid" id="Q95JD4"/>
<dbReference type="OrthoDB" id="534912at2759"/>
<dbReference type="Proteomes" id="UP000001811">
    <property type="component" value="Chromosome 13"/>
</dbReference>
<dbReference type="Bgee" id="ENSOCUG00000016130">
    <property type="expression patterns" value="Expressed in skin of back and 7 other cell types or tissues"/>
</dbReference>
<dbReference type="ExpressionAtlas" id="Q95JD4">
    <property type="expression patterns" value="baseline"/>
</dbReference>
<dbReference type="GO" id="GO:0016323">
    <property type="term" value="C:basolateral plasma membrane"/>
    <property type="evidence" value="ECO:0000250"/>
    <property type="project" value="UniProtKB"/>
</dbReference>
<dbReference type="GO" id="GO:0014731">
    <property type="term" value="C:spectrin-associated cytoskeleton"/>
    <property type="evidence" value="ECO:0000250"/>
    <property type="project" value="UniProtKB"/>
</dbReference>
<dbReference type="GO" id="GO:0008519">
    <property type="term" value="F:ammonium channel activity"/>
    <property type="evidence" value="ECO:0000250"/>
    <property type="project" value="UniProtKB"/>
</dbReference>
<dbReference type="GO" id="GO:0030506">
    <property type="term" value="F:ankyrin binding"/>
    <property type="evidence" value="ECO:0007669"/>
    <property type="project" value="Ensembl"/>
</dbReference>
<dbReference type="GO" id="GO:0035379">
    <property type="term" value="F:carbon dioxide transmembrane transporter activity"/>
    <property type="evidence" value="ECO:0000250"/>
    <property type="project" value="UniProtKB"/>
</dbReference>
<dbReference type="GO" id="GO:0097272">
    <property type="term" value="P:ammonium homeostasis"/>
    <property type="evidence" value="ECO:0007669"/>
    <property type="project" value="TreeGrafter"/>
</dbReference>
<dbReference type="GO" id="GO:0072488">
    <property type="term" value="P:ammonium transmembrane transport"/>
    <property type="evidence" value="ECO:0000250"/>
    <property type="project" value="UniProtKB"/>
</dbReference>
<dbReference type="GO" id="GO:0070634">
    <property type="term" value="P:transepithelial ammonium transport"/>
    <property type="evidence" value="ECO:0007669"/>
    <property type="project" value="Ensembl"/>
</dbReference>
<dbReference type="FunFam" id="1.10.3430.10:FF:000001">
    <property type="entry name" value="Ammonium transporter Rh type C"/>
    <property type="match status" value="1"/>
</dbReference>
<dbReference type="Gene3D" id="1.10.3430.10">
    <property type="entry name" value="Ammonium transporter AmtB like domains"/>
    <property type="match status" value="1"/>
</dbReference>
<dbReference type="InterPro" id="IPR029020">
    <property type="entry name" value="Ammonium/urea_transptr"/>
</dbReference>
<dbReference type="InterPro" id="IPR024041">
    <property type="entry name" value="NH4_transpt_AmtB-like_dom"/>
</dbReference>
<dbReference type="InterPro" id="IPR002229">
    <property type="entry name" value="RhesusRHD"/>
</dbReference>
<dbReference type="PANTHER" id="PTHR11730">
    <property type="entry name" value="AMMONIUM TRANSPORTER"/>
    <property type="match status" value="1"/>
</dbReference>
<dbReference type="PANTHER" id="PTHR11730:SF42">
    <property type="entry name" value="AMMONIUM TRANSPORTER RH TYPE B"/>
    <property type="match status" value="1"/>
</dbReference>
<dbReference type="Pfam" id="PF00909">
    <property type="entry name" value="Ammonium_transp"/>
    <property type="match status" value="1"/>
</dbReference>
<dbReference type="PRINTS" id="PR00342">
    <property type="entry name" value="RHESUSRHD"/>
</dbReference>
<dbReference type="SUPFAM" id="SSF111352">
    <property type="entry name" value="Ammonium transporter"/>
    <property type="match status" value="1"/>
</dbReference>